<comment type="function">
    <text evidence="1">Probable ion channel inhibitor.</text>
</comment>
<comment type="subcellular location">
    <subcellularLocation>
        <location>Secreted</location>
    </subcellularLocation>
</comment>
<comment type="tissue specificity">
    <text>Expressed by the venom gland.</text>
</comment>
<comment type="domain">
    <text evidence="1">The presence of a 'disulfide through disulfide knot' structurally defines this protein as a knottin.</text>
</comment>
<comment type="similarity">
    <text evidence="5">Belongs to the neurotoxin 14 (magi-1) family. 01 (HNTX-16) subfamily.</text>
</comment>
<dbReference type="EMBL" id="GU292934">
    <property type="protein sequence ID" value="ADB56750.1"/>
    <property type="molecule type" value="mRNA"/>
</dbReference>
<dbReference type="ArachnoServer" id="AS001592">
    <property type="toxin name" value="U11-theraphotoxin-Hhn1a"/>
</dbReference>
<dbReference type="GO" id="GO:0005576">
    <property type="term" value="C:extracellular region"/>
    <property type="evidence" value="ECO:0007669"/>
    <property type="project" value="UniProtKB-SubCell"/>
</dbReference>
<dbReference type="GO" id="GO:0019871">
    <property type="term" value="F:sodium channel inhibitor activity"/>
    <property type="evidence" value="ECO:0007669"/>
    <property type="project" value="InterPro"/>
</dbReference>
<dbReference type="GO" id="GO:0090729">
    <property type="term" value="F:toxin activity"/>
    <property type="evidence" value="ECO:0007669"/>
    <property type="project" value="UniProtKB-KW"/>
</dbReference>
<dbReference type="InterPro" id="IPR012627">
    <property type="entry name" value="Toxin_22"/>
</dbReference>
<dbReference type="Pfam" id="PF08092">
    <property type="entry name" value="Toxin_22"/>
    <property type="match status" value="1"/>
</dbReference>
<evidence type="ECO:0000250" key="1"/>
<evidence type="ECO:0000255" key="2"/>
<evidence type="ECO:0000256" key="3">
    <source>
        <dbReference type="SAM" id="MobiDB-lite"/>
    </source>
</evidence>
<evidence type="ECO:0000269" key="4">
    <source>
    </source>
</evidence>
<evidence type="ECO:0000305" key="5"/>
<accession>D2Y257</accession>
<feature type="signal peptide" evidence="2">
    <location>
        <begin position="1"/>
        <end position="21"/>
    </location>
</feature>
<feature type="propeptide" id="PRO_0000400865" evidence="4">
    <location>
        <begin position="22"/>
        <end position="74"/>
    </location>
</feature>
<feature type="peptide" id="PRO_0000400866" description="U11-theraphotoxin-Hhn1a">
    <location>
        <begin position="75"/>
        <end position="113"/>
    </location>
</feature>
<feature type="region of interest" description="Disordered" evidence="3">
    <location>
        <begin position="57"/>
        <end position="83"/>
    </location>
</feature>
<feature type="compositionally biased region" description="Basic and acidic residues" evidence="3">
    <location>
        <begin position="57"/>
        <end position="69"/>
    </location>
</feature>
<feature type="disulfide bond" evidence="1">
    <location>
        <begin position="75"/>
        <end position="90"/>
    </location>
</feature>
<feature type="disulfide bond" evidence="1">
    <location>
        <begin position="82"/>
        <end position="95"/>
    </location>
</feature>
<feature type="disulfide bond" evidence="1">
    <location>
        <begin position="89"/>
        <end position="110"/>
    </location>
</feature>
<organism>
    <name type="scientific">Cyriopagopus hainanus</name>
    <name type="common">Chinese bird spider</name>
    <name type="synonym">Haplopelma hainanum</name>
    <dbReference type="NCBI Taxonomy" id="209901"/>
    <lineage>
        <taxon>Eukaryota</taxon>
        <taxon>Metazoa</taxon>
        <taxon>Ecdysozoa</taxon>
        <taxon>Arthropoda</taxon>
        <taxon>Chelicerata</taxon>
        <taxon>Arachnida</taxon>
        <taxon>Araneae</taxon>
        <taxon>Mygalomorphae</taxon>
        <taxon>Theraphosidae</taxon>
        <taxon>Haplopelma</taxon>
    </lineage>
</organism>
<protein>
    <recommendedName>
        <fullName>U11-theraphotoxin-Hhn1a</fullName>
        <shortName>U11-TRTX-Hhn1a</shortName>
    </recommendedName>
    <alternativeName>
        <fullName>Hainantoxin-XVI.5</fullName>
        <shortName>HNTX-XVI.5</shortName>
    </alternativeName>
    <alternativeName>
        <fullName>Peptide F4-19.87</fullName>
    </alternativeName>
</protein>
<reference key="1">
    <citation type="journal article" date="2010" name="J. Proteome Res.">
        <title>Molecular diversification of peptide toxins from the tarantula Haplopelma hainanum (Ornithoctonus hainana) venom based on transcriptomic, peptidomic, and genomic analyses.</title>
        <authorList>
            <person name="Tang X."/>
            <person name="Zhang Y."/>
            <person name="Hu W."/>
            <person name="Xu D."/>
            <person name="Tao H."/>
            <person name="Yang X."/>
            <person name="Li Y."/>
            <person name="Jiang L."/>
            <person name="Liang S."/>
        </authorList>
    </citation>
    <scope>NUCLEOTIDE SEQUENCE [LARGE SCALE MRNA]</scope>
    <scope>PROTEIN SEQUENCE OF 75-113</scope>
    <scope>IDENTIFICATION BY MASS SPECTROMETRY</scope>
    <source>
        <tissue>Venom</tissue>
        <tissue>Venom gland</tissue>
    </source>
</reference>
<keyword id="KW-0903">Direct protein sequencing</keyword>
<keyword id="KW-1015">Disulfide bond</keyword>
<keyword id="KW-0872">Ion channel impairing toxin</keyword>
<keyword id="KW-0960">Knottin</keyword>
<keyword id="KW-0964">Secreted</keyword>
<keyword id="KW-0732">Signal</keyword>
<keyword id="KW-0800">Toxin</keyword>
<name>H16A5_CYRHA</name>
<proteinExistence type="evidence at protein level"/>
<sequence length="113" mass="13073">MNTVRVTFLLVFVLAVSLGQADKDENRMEMQEKTEQGKSYLDFAENLLLQKLEELEAKPLEEDSEESRNSRQKRCIGEGVPCDENDPRCCSGLVCLKPTLHGIWYKSYYCYKK</sequence>